<sequence length="1628" mass="179403">MDGKEKKSGSKRGSKVFQFDDDADDDEPIGSLLEIMKHKSSKKDKVETESTGKQRQKQVVEKKLSALGKDSEDMDDTLASFRKRLKGNKKGVESGTSRVRNHEGVDTVTNSNLKPIEEANKNEVQSVLLRENGASNSIQKCASETGTLLHKFSGKDKAASPSHEKVETVSSEKEADVFHQITKEESEIPMSEKAVELSRVSVPMPDVHGEVNCTIAPDKHIHLGEPTSESGYYREKNLVMCDCGTQFNFEDRSFESNTQVTLCQKCKYSSHHNASNGGGIQVNTLEDGTAQASPVSIIPCEDENFRGDAISLPNSGKPSTLQRPERIAKKRKLGNMVYEGDVKWENEQGFLDCQSDKSFKGSDKCGFVPSISKEIEIGRAAAVTAGLKAQSVSPIEKIILKEVLKRKGSNQEYLVCRNSILGLWSKNVSRILPVTECGVTGGPSESELPSASLIREVYKFLDQRGYINAGISSVNGKAASSTNQDYDLLQGRQLEESSMASVADSEEGVAFILGQVKAVESTSEGKKCALQNDERDLVGCATSEMLESISKKCEASIIDDNKRSVSMNALQDSTASNVEKHPETFSVAKPALSSTLSSAHSNQMRGRDCVPCEVIDEKKVIVIGAGPAGLTAARHLQRQGFSVTVLEARSRVGGRVFTDRSSLSVPVDLGASIITGIEADVPSERMPDPSVLVCNQLGLELSVLHGFCPLYDTVTGKKVPAELDDALQAEFNSLIDDVDLLVEEIGKERANKMSLEDGLEYGLQRLRMPHDKVNIDKFGLLNSSSKTGIRGPFMQDESWKDDFLNPLERRVMNWHFAHTEYGCAAVLKEVSLPHWNQDEFYGGFGGPHAMIKGGYSRVVESLAEGLDIHLNKIVSDVSYVSDVSAMDNSKHKVRVSTSNGCEYLGDAVLVTVPLGCLKAETIKFSPPLPDWKYASIKQLGFGVLNKVVLEFPTVFWDDSVDYFGATAEETDLRGECFMFWNVKKTVGAPVLIALVVGKAAFEYTNKSKSEHVNHAMMVLRKLFGGDLVPDPVASVVTDWGTDPYSYGAYSYVAIGASGEDYDVLGRPVQNCLFFAGEATCKEHPDTVGGAMMTGVREAVRIIDILRSGNDYTAEIETLEKAQRKSVPVRDEVRDLIKRLEVVELSNVLARQSLLRNMFFSAKTTVGRLHLAKELLNLPGETLKSFAGTKEGLAVLNSWILDSMGKNGTQLLRHCVHILVRVTSDLFALRLSGIGKTVKEKVCAHTSRDIRAIASQLVNVWLDLYRKEKANSGKKSLRQANTTNTSRIRRKLNSPDTDSKGKLSNGNDVKTDEEFEDNQLPMSEEEKAVFAEAEAARAAAEAAAKAFSEAYHNTSLQLPKIPSFHKFARREQYAKMDESDFRKKFPGNVLGRQDCMSEIDSRNCKVRDWYDFPASCLDLDSARIPVDNYSQPSHSNELVSHSKFRECSGESVAADTSFLTGAWVDTGGSSDGFKDSQAIDRWQSQAAAADPEFFNRTLHIKDEEDSIACSTGPPSWKHDQRANECSVSQVTVNKEPHKNHIRSADRLKQGVVDFVASLLMAPYRAKKIDRDVYKSIMKKTATKVMQHTTDVEKAMAVTQFLDSKRKNKIRDFVDKQVDKYMVIPQVPKP</sequence>
<organism>
    <name type="scientific">Arabidopsis thaliana</name>
    <name type="common">Mouse-ear cress</name>
    <dbReference type="NCBI Taxonomy" id="3702"/>
    <lineage>
        <taxon>Eukaryota</taxon>
        <taxon>Viridiplantae</taxon>
        <taxon>Streptophyta</taxon>
        <taxon>Embryophyta</taxon>
        <taxon>Tracheophyta</taxon>
        <taxon>Spermatophyta</taxon>
        <taxon>Magnoliopsida</taxon>
        <taxon>eudicotyledons</taxon>
        <taxon>Gunneridae</taxon>
        <taxon>Pentapetalae</taxon>
        <taxon>rosids</taxon>
        <taxon>malvids</taxon>
        <taxon>Brassicales</taxon>
        <taxon>Brassicaceae</taxon>
        <taxon>Camelineae</taxon>
        <taxon>Arabidopsis</taxon>
    </lineage>
</organism>
<name>LDL3_ARATH</name>
<dbReference type="EC" id="1.-.-.-"/>
<dbReference type="EMBL" id="Z97340">
    <property type="protein sequence ID" value="CAB10408.1"/>
    <property type="status" value="ALT_SEQ"/>
    <property type="molecule type" value="Genomic_DNA"/>
</dbReference>
<dbReference type="EMBL" id="Z97340">
    <property type="protein sequence ID" value="CAB10409.1"/>
    <property type="status" value="ALT_SEQ"/>
    <property type="molecule type" value="Genomic_DNA"/>
</dbReference>
<dbReference type="EMBL" id="AL161543">
    <property type="protein sequence ID" value="CAB78673.1"/>
    <property type="status" value="ALT_SEQ"/>
    <property type="molecule type" value="Genomic_DNA"/>
</dbReference>
<dbReference type="EMBL" id="AL161543">
    <property type="protein sequence ID" value="CAB78674.1"/>
    <property type="status" value="ALT_SEQ"/>
    <property type="molecule type" value="Genomic_DNA"/>
</dbReference>
<dbReference type="EMBL" id="CP002687">
    <property type="protein sequence ID" value="AEE83730.1"/>
    <property type="molecule type" value="Genomic_DNA"/>
</dbReference>
<dbReference type="EMBL" id="CP002687">
    <property type="protein sequence ID" value="ANM66788.1"/>
    <property type="molecule type" value="Genomic_DNA"/>
</dbReference>
<dbReference type="EMBL" id="CP002687">
    <property type="protein sequence ID" value="ANM66789.1"/>
    <property type="molecule type" value="Genomic_DNA"/>
</dbReference>
<dbReference type="EMBL" id="CP002687">
    <property type="protein sequence ID" value="ANM66790.1"/>
    <property type="molecule type" value="Genomic_DNA"/>
</dbReference>
<dbReference type="EMBL" id="CP002687">
    <property type="protein sequence ID" value="ANM66791.1"/>
    <property type="molecule type" value="Genomic_DNA"/>
</dbReference>
<dbReference type="EMBL" id="EF442804">
    <property type="protein sequence ID" value="ABR13972.1"/>
    <property type="molecule type" value="mRNA"/>
</dbReference>
<dbReference type="EMBL" id="AY924818">
    <property type="protein sequence ID" value="AAX23893.1"/>
    <property type="molecule type" value="mRNA"/>
</dbReference>
<dbReference type="PIR" id="F71429">
    <property type="entry name" value="F71429"/>
</dbReference>
<dbReference type="PIR" id="G71429">
    <property type="entry name" value="G71429"/>
</dbReference>
<dbReference type="RefSeq" id="NP_001319957.1">
    <molecule id="F4JLS1-1"/>
    <property type="nucleotide sequence ID" value="NM_001341093.1"/>
</dbReference>
<dbReference type="RefSeq" id="NP_001328664.1">
    <molecule id="F4JLS1-1"/>
    <property type="nucleotide sequence ID" value="NM_001341096.1"/>
</dbReference>
<dbReference type="RefSeq" id="NP_001328665.1">
    <molecule id="F4JLS1-1"/>
    <property type="nucleotide sequence ID" value="NM_001341094.1"/>
</dbReference>
<dbReference type="RefSeq" id="NP_001328666.1">
    <molecule id="F4JLS1-1"/>
    <property type="nucleotide sequence ID" value="NM_001341095.1"/>
</dbReference>
<dbReference type="RefSeq" id="NP_193364.5">
    <molecule id="F4JLS1-1"/>
    <property type="nucleotide sequence ID" value="NM_117726.5"/>
</dbReference>
<dbReference type="SMR" id="F4JLS1"/>
<dbReference type="FunCoup" id="F4JLS1">
    <property type="interactions" value="2492"/>
</dbReference>
<dbReference type="STRING" id="3702.F4JLS1"/>
<dbReference type="GlyGen" id="F4JLS1">
    <property type="glycosylation" value="1 site"/>
</dbReference>
<dbReference type="iPTMnet" id="F4JLS1"/>
<dbReference type="PaxDb" id="3702-AT4G16310.1"/>
<dbReference type="ProteomicsDB" id="237134">
    <molecule id="F4JLS1-1"/>
</dbReference>
<dbReference type="EnsemblPlants" id="AT4G16310.1">
    <molecule id="F4JLS1-1"/>
    <property type="protein sequence ID" value="AT4G16310.1"/>
    <property type="gene ID" value="AT4G16310"/>
</dbReference>
<dbReference type="EnsemblPlants" id="AT4G16310.2">
    <molecule id="F4JLS1-1"/>
    <property type="protein sequence ID" value="AT4G16310.2"/>
    <property type="gene ID" value="AT4G16310"/>
</dbReference>
<dbReference type="EnsemblPlants" id="AT4G16310.3">
    <molecule id="F4JLS1-1"/>
    <property type="protein sequence ID" value="AT4G16310.3"/>
    <property type="gene ID" value="AT4G16310"/>
</dbReference>
<dbReference type="EnsemblPlants" id="AT4G16310.4">
    <molecule id="F4JLS1-1"/>
    <property type="protein sequence ID" value="AT4G16310.4"/>
    <property type="gene ID" value="AT4G16310"/>
</dbReference>
<dbReference type="EnsemblPlants" id="AT4G16310.5">
    <molecule id="F4JLS1-1"/>
    <property type="protein sequence ID" value="AT4G16310.5"/>
    <property type="gene ID" value="AT4G16310"/>
</dbReference>
<dbReference type="GeneID" id="827325"/>
<dbReference type="Gramene" id="AT4G16310.1">
    <molecule id="F4JLS1-1"/>
    <property type="protein sequence ID" value="AT4G16310.1"/>
    <property type="gene ID" value="AT4G16310"/>
</dbReference>
<dbReference type="Gramene" id="AT4G16310.2">
    <molecule id="F4JLS1-1"/>
    <property type="protein sequence ID" value="AT4G16310.2"/>
    <property type="gene ID" value="AT4G16310"/>
</dbReference>
<dbReference type="Gramene" id="AT4G16310.3">
    <molecule id="F4JLS1-1"/>
    <property type="protein sequence ID" value="AT4G16310.3"/>
    <property type="gene ID" value="AT4G16310"/>
</dbReference>
<dbReference type="Gramene" id="AT4G16310.4">
    <molecule id="F4JLS1-1"/>
    <property type="protein sequence ID" value="AT4G16310.4"/>
    <property type="gene ID" value="AT4G16310"/>
</dbReference>
<dbReference type="Gramene" id="AT4G16310.5">
    <molecule id="F4JLS1-1"/>
    <property type="protein sequence ID" value="AT4G16310.5"/>
    <property type="gene ID" value="AT4G16310"/>
</dbReference>
<dbReference type="KEGG" id="ath:AT4G16310"/>
<dbReference type="Araport" id="AT4G16310"/>
<dbReference type="TAIR" id="AT4G16310">
    <property type="gene designation" value="LDL3"/>
</dbReference>
<dbReference type="eggNOG" id="KOG0029">
    <property type="taxonomic scope" value="Eukaryota"/>
</dbReference>
<dbReference type="HOGENOM" id="CLU_001527_1_0_1"/>
<dbReference type="InParanoid" id="F4JLS1"/>
<dbReference type="OMA" id="FAMRDHY"/>
<dbReference type="PRO" id="PR:F4JLS1"/>
<dbReference type="Proteomes" id="UP000006548">
    <property type="component" value="Chromosome 4"/>
</dbReference>
<dbReference type="ExpressionAtlas" id="F4JLS1">
    <property type="expression patterns" value="baseline and differential"/>
</dbReference>
<dbReference type="GO" id="GO:0141052">
    <property type="term" value="F:histone H3 demethylase activity"/>
    <property type="evidence" value="ECO:0007669"/>
    <property type="project" value="UniProtKB-ARBA"/>
</dbReference>
<dbReference type="GO" id="GO:0016491">
    <property type="term" value="F:oxidoreductase activity"/>
    <property type="evidence" value="ECO:0000318"/>
    <property type="project" value="GO_Central"/>
</dbReference>
<dbReference type="GO" id="GO:0016705">
    <property type="term" value="F:oxidoreductase activity, acting on paired donors, with incorporation or reduction of molecular oxygen"/>
    <property type="evidence" value="ECO:0007669"/>
    <property type="project" value="UniProtKB-ARBA"/>
</dbReference>
<dbReference type="FunFam" id="3.50.50.60:FF:000507">
    <property type="entry name" value="Lysine-specific histone demethylase 1 homolog 3"/>
    <property type="match status" value="1"/>
</dbReference>
<dbReference type="Gene3D" id="3.90.660.10">
    <property type="match status" value="1"/>
</dbReference>
<dbReference type="Gene3D" id="1.20.930.10">
    <property type="entry name" value="Conserved domain common to transcription factors TFIIS, elongin A, CRSP70"/>
    <property type="match status" value="1"/>
</dbReference>
<dbReference type="Gene3D" id="3.50.50.60">
    <property type="entry name" value="FAD/NAD(P)-binding domain"/>
    <property type="match status" value="2"/>
</dbReference>
<dbReference type="Gene3D" id="1.10.10.10">
    <property type="entry name" value="Winged helix-like DNA-binding domain superfamily/Winged helix DNA-binding domain"/>
    <property type="match status" value="1"/>
</dbReference>
<dbReference type="InterPro" id="IPR002937">
    <property type="entry name" value="Amino_oxidase"/>
</dbReference>
<dbReference type="InterPro" id="IPR036188">
    <property type="entry name" value="FAD/NAD-bd_sf"/>
</dbReference>
<dbReference type="InterPro" id="IPR050281">
    <property type="entry name" value="Flavin_monoamine_oxidase"/>
</dbReference>
<dbReference type="InterPro" id="IPR009057">
    <property type="entry name" value="Homeodomain-like_sf"/>
</dbReference>
<dbReference type="InterPro" id="IPR007526">
    <property type="entry name" value="SWIRM"/>
</dbReference>
<dbReference type="InterPro" id="IPR035441">
    <property type="entry name" value="TFIIS/LEDGF_dom_sf"/>
</dbReference>
<dbReference type="InterPro" id="IPR036388">
    <property type="entry name" value="WH-like_DNA-bd_sf"/>
</dbReference>
<dbReference type="PANTHER" id="PTHR10742">
    <property type="entry name" value="FLAVIN MONOAMINE OXIDASE"/>
    <property type="match status" value="1"/>
</dbReference>
<dbReference type="PANTHER" id="PTHR10742:SF410">
    <property type="entry name" value="LYSINE-SPECIFIC HISTONE DEMETHYLASE 2"/>
    <property type="match status" value="1"/>
</dbReference>
<dbReference type="Pfam" id="PF01593">
    <property type="entry name" value="Amino_oxidase"/>
    <property type="match status" value="1"/>
</dbReference>
<dbReference type="Pfam" id="PF04433">
    <property type="entry name" value="SWIRM"/>
    <property type="match status" value="1"/>
</dbReference>
<dbReference type="PRINTS" id="PR00419">
    <property type="entry name" value="ADXRDTASE"/>
</dbReference>
<dbReference type="SUPFAM" id="SSF47676">
    <property type="entry name" value="Conserved domain common to transcription factors TFIIS, elongin A, CRSP70"/>
    <property type="match status" value="1"/>
</dbReference>
<dbReference type="SUPFAM" id="SSF54373">
    <property type="entry name" value="FAD-linked reductases, C-terminal domain"/>
    <property type="match status" value="1"/>
</dbReference>
<dbReference type="SUPFAM" id="SSF51905">
    <property type="entry name" value="FAD/NAD(P)-binding domain"/>
    <property type="match status" value="1"/>
</dbReference>
<dbReference type="SUPFAM" id="SSF46689">
    <property type="entry name" value="Homeodomain-like"/>
    <property type="match status" value="1"/>
</dbReference>
<dbReference type="PROSITE" id="PS50934">
    <property type="entry name" value="SWIRM"/>
    <property type="match status" value="1"/>
</dbReference>
<gene>
    <name type="primary">LDL3</name>
    <name type="ordered locus">At4g16310/At4g16320</name>
    <name type="ORF">dl4185w/dl4190w</name>
    <name type="ORF">FCAALL.342/FCAALL.344</name>
</gene>
<reference key="1">
    <citation type="journal article" date="1998" name="Nature">
        <title>Analysis of 1.9 Mb of contiguous sequence from chromosome 4 of Arabidopsis thaliana.</title>
        <authorList>
            <person name="Bevan M."/>
            <person name="Bancroft I."/>
            <person name="Bent E."/>
            <person name="Love K."/>
            <person name="Goodman H.M."/>
            <person name="Dean C."/>
            <person name="Bergkamp R."/>
            <person name="Dirkse W."/>
            <person name="van Staveren M."/>
            <person name="Stiekema W."/>
            <person name="Drost L."/>
            <person name="Ridley P."/>
            <person name="Hudson S.-A."/>
            <person name="Patel K."/>
            <person name="Murphy G."/>
            <person name="Piffanelli P."/>
            <person name="Wedler H."/>
            <person name="Wedler E."/>
            <person name="Wambutt R."/>
            <person name="Weitzenegger T."/>
            <person name="Pohl T."/>
            <person name="Terryn N."/>
            <person name="Gielen J."/>
            <person name="Villarroel R."/>
            <person name="De Clercq R."/>
            <person name="van Montagu M."/>
            <person name="Lecharny A."/>
            <person name="Aubourg S."/>
            <person name="Gy I."/>
            <person name="Kreis M."/>
            <person name="Lao N."/>
            <person name="Kavanagh T."/>
            <person name="Hempel S."/>
            <person name="Kotter P."/>
            <person name="Entian K.-D."/>
            <person name="Rieger M."/>
            <person name="Schaefer M."/>
            <person name="Funk B."/>
            <person name="Mueller-Auer S."/>
            <person name="Silvey M."/>
            <person name="James R."/>
            <person name="Monfort A."/>
            <person name="Pons A."/>
            <person name="Puigdomenech P."/>
            <person name="Douka A."/>
            <person name="Voukelatou E."/>
            <person name="Milioni D."/>
            <person name="Hatzopoulos P."/>
            <person name="Piravandi E."/>
            <person name="Obermaier B."/>
            <person name="Hilbert H."/>
            <person name="Duesterhoeft A."/>
            <person name="Moores T."/>
            <person name="Jones J.D.G."/>
            <person name="Eneva T."/>
            <person name="Palme K."/>
            <person name="Benes V."/>
            <person name="Rechmann S."/>
            <person name="Ansorge W."/>
            <person name="Cooke R."/>
            <person name="Berger C."/>
            <person name="Delseny M."/>
            <person name="Voet M."/>
            <person name="Volckaert G."/>
            <person name="Mewes H.-W."/>
            <person name="Klosterman S."/>
            <person name="Schueller C."/>
            <person name="Chalwatzis N."/>
        </authorList>
    </citation>
    <scope>NUCLEOTIDE SEQUENCE [LARGE SCALE GENOMIC DNA]</scope>
    <source>
        <strain>cv. Columbia</strain>
    </source>
</reference>
<reference key="2">
    <citation type="journal article" date="1999" name="Nature">
        <title>Sequence and analysis of chromosome 4 of the plant Arabidopsis thaliana.</title>
        <authorList>
            <person name="Mayer K.F.X."/>
            <person name="Schueller C."/>
            <person name="Wambutt R."/>
            <person name="Murphy G."/>
            <person name="Volckaert G."/>
            <person name="Pohl T."/>
            <person name="Duesterhoeft A."/>
            <person name="Stiekema W."/>
            <person name="Entian K.-D."/>
            <person name="Terryn N."/>
            <person name="Harris B."/>
            <person name="Ansorge W."/>
            <person name="Brandt P."/>
            <person name="Grivell L.A."/>
            <person name="Rieger M."/>
            <person name="Weichselgartner M."/>
            <person name="de Simone V."/>
            <person name="Obermaier B."/>
            <person name="Mache R."/>
            <person name="Mueller M."/>
            <person name="Kreis M."/>
            <person name="Delseny M."/>
            <person name="Puigdomenech P."/>
            <person name="Watson M."/>
            <person name="Schmidtheini T."/>
            <person name="Reichert B."/>
            <person name="Portetelle D."/>
            <person name="Perez-Alonso M."/>
            <person name="Boutry M."/>
            <person name="Bancroft I."/>
            <person name="Vos P."/>
            <person name="Hoheisel J."/>
            <person name="Zimmermann W."/>
            <person name="Wedler H."/>
            <person name="Ridley P."/>
            <person name="Langham S.-A."/>
            <person name="McCullagh B."/>
            <person name="Bilham L."/>
            <person name="Robben J."/>
            <person name="van der Schueren J."/>
            <person name="Grymonprez B."/>
            <person name="Chuang Y.-J."/>
            <person name="Vandenbussche F."/>
            <person name="Braeken M."/>
            <person name="Weltjens I."/>
            <person name="Voet M."/>
            <person name="Bastiaens I."/>
            <person name="Aert R."/>
            <person name="Defoor E."/>
            <person name="Weitzenegger T."/>
            <person name="Bothe G."/>
            <person name="Ramsperger U."/>
            <person name="Hilbert H."/>
            <person name="Braun M."/>
            <person name="Holzer E."/>
            <person name="Brandt A."/>
            <person name="Peters S."/>
            <person name="van Staveren M."/>
            <person name="Dirkse W."/>
            <person name="Mooijman P."/>
            <person name="Klein Lankhorst R."/>
            <person name="Rose M."/>
            <person name="Hauf J."/>
            <person name="Koetter P."/>
            <person name="Berneiser S."/>
            <person name="Hempel S."/>
            <person name="Feldpausch M."/>
            <person name="Lamberth S."/>
            <person name="Van den Daele H."/>
            <person name="De Keyser A."/>
            <person name="Buysshaert C."/>
            <person name="Gielen J."/>
            <person name="Villarroel R."/>
            <person name="De Clercq R."/>
            <person name="van Montagu M."/>
            <person name="Rogers J."/>
            <person name="Cronin A."/>
            <person name="Quail M.A."/>
            <person name="Bray-Allen S."/>
            <person name="Clark L."/>
            <person name="Doggett J."/>
            <person name="Hall S."/>
            <person name="Kay M."/>
            <person name="Lennard N."/>
            <person name="McLay K."/>
            <person name="Mayes R."/>
            <person name="Pettett A."/>
            <person name="Rajandream M.A."/>
            <person name="Lyne M."/>
            <person name="Benes V."/>
            <person name="Rechmann S."/>
            <person name="Borkova D."/>
            <person name="Bloecker H."/>
            <person name="Scharfe M."/>
            <person name="Grimm M."/>
            <person name="Loehnert T.-H."/>
            <person name="Dose S."/>
            <person name="de Haan M."/>
            <person name="Maarse A.C."/>
            <person name="Schaefer M."/>
            <person name="Mueller-Auer S."/>
            <person name="Gabel C."/>
            <person name="Fuchs M."/>
            <person name="Fartmann B."/>
            <person name="Granderath K."/>
            <person name="Dauner D."/>
            <person name="Herzl A."/>
            <person name="Neumann S."/>
            <person name="Argiriou A."/>
            <person name="Vitale D."/>
            <person name="Liguori R."/>
            <person name="Piravandi E."/>
            <person name="Massenet O."/>
            <person name="Quigley F."/>
            <person name="Clabauld G."/>
            <person name="Muendlein A."/>
            <person name="Felber R."/>
            <person name="Schnabl S."/>
            <person name="Hiller R."/>
            <person name="Schmidt W."/>
            <person name="Lecharny A."/>
            <person name="Aubourg S."/>
            <person name="Chefdor F."/>
            <person name="Cooke R."/>
            <person name="Berger C."/>
            <person name="Monfort A."/>
            <person name="Casacuberta E."/>
            <person name="Gibbons T."/>
            <person name="Weber N."/>
            <person name="Vandenbol M."/>
            <person name="Bargues M."/>
            <person name="Terol J."/>
            <person name="Torres A."/>
            <person name="Perez-Perez A."/>
            <person name="Purnelle B."/>
            <person name="Bent E."/>
            <person name="Johnson S."/>
            <person name="Tacon D."/>
            <person name="Jesse T."/>
            <person name="Heijnen L."/>
            <person name="Schwarz S."/>
            <person name="Scholler P."/>
            <person name="Heber S."/>
            <person name="Francs P."/>
            <person name="Bielke C."/>
            <person name="Frishman D."/>
            <person name="Haase D."/>
            <person name="Lemcke K."/>
            <person name="Mewes H.-W."/>
            <person name="Stocker S."/>
            <person name="Zaccaria P."/>
            <person name="Bevan M."/>
            <person name="Wilson R.K."/>
            <person name="de la Bastide M."/>
            <person name="Habermann K."/>
            <person name="Parnell L."/>
            <person name="Dedhia N."/>
            <person name="Gnoj L."/>
            <person name="Schutz K."/>
            <person name="Huang E."/>
            <person name="Spiegel L."/>
            <person name="Sekhon M."/>
            <person name="Murray J."/>
            <person name="Sheet P."/>
            <person name="Cordes M."/>
            <person name="Abu-Threideh J."/>
            <person name="Stoneking T."/>
            <person name="Kalicki J."/>
            <person name="Graves T."/>
            <person name="Harmon G."/>
            <person name="Edwards J."/>
            <person name="Latreille P."/>
            <person name="Courtney L."/>
            <person name="Cloud J."/>
            <person name="Abbott A."/>
            <person name="Scott K."/>
            <person name="Johnson D."/>
            <person name="Minx P."/>
            <person name="Bentley D."/>
            <person name="Fulton B."/>
            <person name="Miller N."/>
            <person name="Greco T."/>
            <person name="Kemp K."/>
            <person name="Kramer J."/>
            <person name="Fulton L."/>
            <person name="Mardis E."/>
            <person name="Dante M."/>
            <person name="Pepin K."/>
            <person name="Hillier L.W."/>
            <person name="Nelson J."/>
            <person name="Spieth J."/>
            <person name="Ryan E."/>
            <person name="Andrews S."/>
            <person name="Geisel C."/>
            <person name="Layman D."/>
            <person name="Du H."/>
            <person name="Ali J."/>
            <person name="Berghoff A."/>
            <person name="Jones K."/>
            <person name="Drone K."/>
            <person name="Cotton M."/>
            <person name="Joshu C."/>
            <person name="Antonoiu B."/>
            <person name="Zidanic M."/>
            <person name="Strong C."/>
            <person name="Sun H."/>
            <person name="Lamar B."/>
            <person name="Yordan C."/>
            <person name="Ma P."/>
            <person name="Zhong J."/>
            <person name="Preston R."/>
            <person name="Vil D."/>
            <person name="Shekher M."/>
            <person name="Matero A."/>
            <person name="Shah R."/>
            <person name="Swaby I.K."/>
            <person name="O'Shaughnessy A."/>
            <person name="Rodriguez M."/>
            <person name="Hoffman J."/>
            <person name="Till S."/>
            <person name="Granat S."/>
            <person name="Shohdy N."/>
            <person name="Hasegawa A."/>
            <person name="Hameed A."/>
            <person name="Lodhi M."/>
            <person name="Johnson A."/>
            <person name="Chen E."/>
            <person name="Marra M.A."/>
            <person name="Martienssen R."/>
            <person name="McCombie W.R."/>
        </authorList>
    </citation>
    <scope>NUCLEOTIDE SEQUENCE [LARGE SCALE GENOMIC DNA]</scope>
    <source>
        <strain>cv. Columbia</strain>
    </source>
</reference>
<reference key="3">
    <citation type="journal article" date="2017" name="Plant J.">
        <title>Araport11: a complete reannotation of the Arabidopsis thaliana reference genome.</title>
        <authorList>
            <person name="Cheng C.Y."/>
            <person name="Krishnakumar V."/>
            <person name="Chan A.P."/>
            <person name="Thibaud-Nissen F."/>
            <person name="Schobel S."/>
            <person name="Town C.D."/>
        </authorList>
    </citation>
    <scope>GENOME REANNOTATION</scope>
    <source>
        <strain>cv. Columbia</strain>
    </source>
</reference>
<reference key="4">
    <citation type="submission" date="2007-02" db="EMBL/GenBank/DDBJ databases">
        <authorList>
            <person name="Krichevsky A."/>
            <person name="Citovsky V."/>
        </authorList>
    </citation>
    <scope>NUCLEOTIDE SEQUENCE [MRNA] OF 204-1102</scope>
    <source>
        <strain>cv. Columbia</strain>
    </source>
</reference>
<reference key="5">
    <citation type="submission" date="2005-02" db="EMBL/GenBank/DDBJ databases">
        <authorList>
            <person name="Underwood B.A."/>
            <person name="Xiao Y.-L."/>
            <person name="Moskal W.A. Jr."/>
            <person name="Monaghan E.L."/>
            <person name="Wang W."/>
            <person name="Redman J.C."/>
            <person name="Wu H.C."/>
            <person name="Utterback T."/>
            <person name="Town C.D."/>
        </authorList>
    </citation>
    <scope>NUCLEOTIDE SEQUENCE [LARGE SCALE MRNA] OF 1321-1536</scope>
    <source>
        <strain>cv. Columbia</strain>
    </source>
</reference>
<reference key="6">
    <citation type="journal article" date="2007" name="Plant Cell">
        <title>Arabidopsis relatives of the human lysine-specific demethylase1 repress the expression of FWA and FLOWERING LOCUS C and thus promote the floral transition.</title>
        <authorList>
            <person name="Jiang D."/>
            <person name="Yang W."/>
            <person name="He Y."/>
            <person name="Amasino R.M."/>
        </authorList>
    </citation>
    <scope>FUNCTION</scope>
</reference>
<evidence type="ECO:0000250" key="1"/>
<evidence type="ECO:0000255" key="2">
    <source>
        <dbReference type="PROSITE-ProRule" id="PRU00247"/>
    </source>
</evidence>
<evidence type="ECO:0000256" key="3">
    <source>
        <dbReference type="SAM" id="MobiDB-lite"/>
    </source>
</evidence>
<evidence type="ECO:0000269" key="4">
    <source>
    </source>
</evidence>
<evidence type="ECO:0000305" key="5"/>
<proteinExistence type="evidence at transcript level"/>
<accession>F4JLS1</accession>
<accession>D2CJC4</accession>
<accession>O23476</accession>
<accession>O23477</accession>
<accession>Q5BPL0</accession>
<feature type="chain" id="PRO_0000430140" description="Lysine-specific histone demethylase 1 homolog 3">
    <location>
        <begin position="1"/>
        <end position="1628"/>
    </location>
</feature>
<feature type="domain" description="SWIRM" evidence="2">
    <location>
        <begin position="378"/>
        <end position="478"/>
    </location>
</feature>
<feature type="region of interest" description="Disordered" evidence="3">
    <location>
        <begin position="1"/>
        <end position="71"/>
    </location>
</feature>
<feature type="region of interest" description="Disordered" evidence="3">
    <location>
        <begin position="1271"/>
        <end position="1317"/>
    </location>
</feature>
<feature type="compositionally biased region" description="Acidic residues" evidence="3">
    <location>
        <begin position="19"/>
        <end position="28"/>
    </location>
</feature>
<feature type="compositionally biased region" description="Basic and acidic residues" evidence="3">
    <location>
        <begin position="43"/>
        <end position="64"/>
    </location>
</feature>
<feature type="binding site" evidence="1">
    <location>
        <position position="647"/>
    </location>
    <ligand>
        <name>FAD</name>
        <dbReference type="ChEBI" id="CHEBI:57692"/>
    </ligand>
</feature>
<feature type="binding site" evidence="1">
    <location>
        <position position="649"/>
    </location>
    <ligand>
        <name>FAD</name>
        <dbReference type="ChEBI" id="CHEBI:57692"/>
    </ligand>
</feature>
<feature type="binding site" evidence="1">
    <location>
        <position position="655"/>
    </location>
    <ligand>
        <name>FAD</name>
        <dbReference type="ChEBI" id="CHEBI:57692"/>
    </ligand>
</feature>
<feature type="binding site" evidence="1">
    <location>
        <position position="1077"/>
    </location>
    <ligand>
        <name>FAD</name>
        <dbReference type="ChEBI" id="CHEBI:57692"/>
    </ligand>
</feature>
<feature type="splice variant" id="VSP_055610" description="In isoform 2." evidence="5">
    <location>
        <begin position="1232"/>
        <end position="1296"/>
    </location>
</feature>
<feature type="sequence conflict" description="In Ref. 1; CAB10408/CAB78673." evidence="5" ref="1">
    <original>S</original>
    <variation>P</variation>
    <location>
        <position position="41"/>
    </location>
</feature>
<feature type="sequence conflict" description="In Ref. 1; CAB10408/CAB78673." evidence="5" ref="1">
    <original>D</original>
    <variation>A</variation>
    <location>
        <position position="70"/>
    </location>
</feature>
<feature type="sequence conflict" description="In Ref. 4; ABR13972 and 1; CAB10408/CAB78673." evidence="5" ref="4 1">
    <original>H</original>
    <variation>D</variation>
    <location>
        <position position="220"/>
    </location>
</feature>
<feature type="sequence conflict" description="In Ref. 4; ABR13972 and 1; CAB10408/CAB78673." evidence="5" ref="4 1">
    <original>D</original>
    <variation>E</variation>
    <location>
        <position position="1042"/>
    </location>
</feature>
<keyword id="KW-0025">Alternative splicing</keyword>
<keyword id="KW-0156">Chromatin regulator</keyword>
<keyword id="KW-0274">FAD</keyword>
<keyword id="KW-0285">Flavoprotein</keyword>
<keyword id="KW-0560">Oxidoreductase</keyword>
<keyword id="KW-1185">Reference proteome</keyword>
<keyword id="KW-0678">Repressor</keyword>
<keyword id="KW-0804">Transcription</keyword>
<keyword id="KW-0805">Transcription regulation</keyword>
<protein>
    <recommendedName>
        <fullName>Lysine-specific histone demethylase 1 homolog 3</fullName>
        <ecNumber>1.-.-.-</ecNumber>
    </recommendedName>
    <alternativeName>
        <fullName>Flavin-containing amine oxidase domain-containing protein 3</fullName>
    </alternativeName>
    <alternativeName>
        <fullName>Protein LSD1-like 3</fullName>
    </alternativeName>
</protein>
<comment type="function">
    <text evidence="4">Probable histone demethylase that reduces the levels of histone H3 'Lys-4' methylation in chromatin.</text>
</comment>
<comment type="cofactor">
    <cofactor evidence="5">
        <name>FAD</name>
        <dbReference type="ChEBI" id="CHEBI:57692"/>
    </cofactor>
</comment>
<comment type="alternative products">
    <event type="alternative splicing"/>
    <isoform>
        <id>F4JLS1-1</id>
        <name>1</name>
        <sequence type="displayed"/>
    </isoform>
    <isoform>
        <id>F4JLS1-2</id>
        <name>2</name>
        <sequence type="described" ref="VSP_055610"/>
    </isoform>
</comment>
<comment type="similarity">
    <text evidence="5">Belongs to the flavin monoamine oxidase family.</text>
</comment>
<comment type="sequence caution" evidence="5">
    <conflict type="erroneous gene model prediction">
        <sequence resource="EMBL-CDS" id="CAB10408"/>
    </conflict>
    <text>Was originally thought to correspond to two different genes At4g16310 and At4g16320.</text>
</comment>
<comment type="sequence caution" evidence="5">
    <conflict type="erroneous gene model prediction">
        <sequence resource="EMBL-CDS" id="CAB10409"/>
    </conflict>
    <text>Was originally thought to correspond to two different genes At4g16310 and At4g16320.</text>
</comment>
<comment type="sequence caution" evidence="5">
    <conflict type="erroneous gene model prediction">
        <sequence resource="EMBL-CDS" id="CAB78673"/>
    </conflict>
    <text>Was originally thought to correspond to two different genes At4g16310 and At4g16320.</text>
</comment>
<comment type="sequence caution" evidence="5">
    <conflict type="erroneous gene model prediction">
        <sequence resource="EMBL-CDS" id="CAB78674"/>
    </conflict>
    <text>Was originally thought to correspond to two different genes At4g16310 and At4g16320.</text>
</comment>